<gene>
    <name type="primary">ybeY</name>
    <name type="ordered locus">BTH_I0589</name>
</gene>
<comment type="function">
    <text evidence="1">Single strand-specific metallo-endoribonuclease involved in late-stage 70S ribosome quality control and in maturation of the 3' terminus of the 16S rRNA.</text>
</comment>
<comment type="cofactor">
    <cofactor evidence="1">
        <name>Zn(2+)</name>
        <dbReference type="ChEBI" id="CHEBI:29105"/>
    </cofactor>
    <text evidence="1">Binds 1 zinc ion.</text>
</comment>
<comment type="subcellular location">
    <subcellularLocation>
        <location evidence="1">Cytoplasm</location>
    </subcellularLocation>
</comment>
<comment type="similarity">
    <text evidence="3">Belongs to the endoribonuclease YbeY family.</text>
</comment>
<reference key="1">
    <citation type="journal article" date="2005" name="BMC Genomics">
        <title>Bacterial genome adaptation to niches: divergence of the potential virulence genes in three Burkholderia species of different survival strategies.</title>
        <authorList>
            <person name="Kim H.S."/>
            <person name="Schell M.A."/>
            <person name="Yu Y."/>
            <person name="Ulrich R.L."/>
            <person name="Sarria S.H."/>
            <person name="Nierman W.C."/>
            <person name="DeShazer D."/>
        </authorList>
    </citation>
    <scope>NUCLEOTIDE SEQUENCE [LARGE SCALE GENOMIC DNA]</scope>
    <source>
        <strain>ATCC 700388 / DSM 13276 / CCUG 48851 / CIP 106301 / E264</strain>
    </source>
</reference>
<organism>
    <name type="scientific">Burkholderia thailandensis (strain ATCC 700388 / DSM 13276 / CCUG 48851 / CIP 106301 / E264)</name>
    <dbReference type="NCBI Taxonomy" id="271848"/>
    <lineage>
        <taxon>Bacteria</taxon>
        <taxon>Pseudomonadati</taxon>
        <taxon>Pseudomonadota</taxon>
        <taxon>Betaproteobacteria</taxon>
        <taxon>Burkholderiales</taxon>
        <taxon>Burkholderiaceae</taxon>
        <taxon>Burkholderia</taxon>
        <taxon>pseudomallei group</taxon>
    </lineage>
</organism>
<protein>
    <recommendedName>
        <fullName>Endoribonuclease YbeY</fullName>
        <ecNumber>3.1.-.-</ecNumber>
    </recommendedName>
</protein>
<name>YBEY_BURTA</name>
<dbReference type="EC" id="3.1.-.-"/>
<dbReference type="EMBL" id="CP000086">
    <property type="protein sequence ID" value="ABC39120.1"/>
    <property type="molecule type" value="Genomic_DNA"/>
</dbReference>
<dbReference type="SMR" id="Q2T103"/>
<dbReference type="KEGG" id="bte:BTH_I0589"/>
<dbReference type="HOGENOM" id="CLU_626548_0_0_4"/>
<dbReference type="Proteomes" id="UP000001930">
    <property type="component" value="Chromosome I"/>
</dbReference>
<dbReference type="GO" id="GO:0005737">
    <property type="term" value="C:cytoplasm"/>
    <property type="evidence" value="ECO:0007669"/>
    <property type="project" value="UniProtKB-SubCell"/>
</dbReference>
<dbReference type="GO" id="GO:0004222">
    <property type="term" value="F:metalloendopeptidase activity"/>
    <property type="evidence" value="ECO:0007669"/>
    <property type="project" value="InterPro"/>
</dbReference>
<dbReference type="GO" id="GO:0004521">
    <property type="term" value="F:RNA endonuclease activity"/>
    <property type="evidence" value="ECO:0007669"/>
    <property type="project" value="UniProtKB-UniRule"/>
</dbReference>
<dbReference type="GO" id="GO:0008270">
    <property type="term" value="F:zinc ion binding"/>
    <property type="evidence" value="ECO:0007669"/>
    <property type="project" value="UniProtKB-UniRule"/>
</dbReference>
<dbReference type="GO" id="GO:0006364">
    <property type="term" value="P:rRNA processing"/>
    <property type="evidence" value="ECO:0007669"/>
    <property type="project" value="UniProtKB-UniRule"/>
</dbReference>
<dbReference type="Gene3D" id="3.40.390.30">
    <property type="entry name" value="Metalloproteases ('zincins'), catalytic domain"/>
    <property type="match status" value="1"/>
</dbReference>
<dbReference type="HAMAP" id="MF_00009">
    <property type="entry name" value="Endoribonucl_YbeY"/>
    <property type="match status" value="1"/>
</dbReference>
<dbReference type="InterPro" id="IPR023091">
    <property type="entry name" value="MetalPrtase_cat_dom_sf_prd"/>
</dbReference>
<dbReference type="InterPro" id="IPR002036">
    <property type="entry name" value="YbeY"/>
</dbReference>
<dbReference type="InterPro" id="IPR020549">
    <property type="entry name" value="YbeY_CS"/>
</dbReference>
<dbReference type="NCBIfam" id="NF010570">
    <property type="entry name" value="PRK13963.1"/>
    <property type="match status" value="1"/>
</dbReference>
<dbReference type="NCBIfam" id="TIGR00043">
    <property type="entry name" value="rRNA maturation RNase YbeY"/>
    <property type="match status" value="1"/>
</dbReference>
<dbReference type="PANTHER" id="PTHR46986">
    <property type="entry name" value="ENDORIBONUCLEASE YBEY, CHLOROPLASTIC"/>
    <property type="match status" value="1"/>
</dbReference>
<dbReference type="PANTHER" id="PTHR46986:SF1">
    <property type="entry name" value="ENDORIBONUCLEASE YBEY, CHLOROPLASTIC"/>
    <property type="match status" value="1"/>
</dbReference>
<dbReference type="Pfam" id="PF02130">
    <property type="entry name" value="YbeY"/>
    <property type="match status" value="1"/>
</dbReference>
<dbReference type="SUPFAM" id="SSF55486">
    <property type="entry name" value="Metalloproteases ('zincins'), catalytic domain"/>
    <property type="match status" value="1"/>
</dbReference>
<dbReference type="PROSITE" id="PS01306">
    <property type="entry name" value="UPF0054"/>
    <property type="match status" value="1"/>
</dbReference>
<sequence>MRATGRARGARRPLRVVRRPGCPVTRPNRPVHQSIGPTSRLARVDVHPSACAVSIEIAPLAARGRRNTDPAGTPLADSAPLRQPLRSVRAHRFGIRAMTRGRAITRTSNEPSSHAGHASPKPPANHRPGRRPTSTPNRRAPAPPPSATPRETPSGRSSVWCILNRVQTDVNVMKSSRSSKSARAEAAQPEFPRLSLFDAKGKVKTVEAQALRVDFADGRSLMFDLSGSSGDAAVAIVAQHTDPSLRATIALRPEHYDSVTVEAGADENPDFAHDATDDAGEDAPNREPELDLAVQYGDEIGDAQRRSLPKRKVIAEWLEPAIFSDAQFTVRFVGADEGRTLNHSYRHKDYATNVLTFAYGEEPDGVTVADLVLCCPVVEKEAREQGKTLVAHYAHLLVHGALHAQGYDHERGEEDAAEMEALEIDILAKLGFPNPYR</sequence>
<proteinExistence type="inferred from homology"/>
<keyword id="KW-0963">Cytoplasm</keyword>
<keyword id="KW-0255">Endonuclease</keyword>
<keyword id="KW-0378">Hydrolase</keyword>
<keyword id="KW-0479">Metal-binding</keyword>
<keyword id="KW-0540">Nuclease</keyword>
<keyword id="KW-0690">Ribosome biogenesis</keyword>
<keyword id="KW-0698">rRNA processing</keyword>
<keyword id="KW-0862">Zinc</keyword>
<feature type="chain" id="PRO_0000284177" description="Endoribonuclease YbeY">
    <location>
        <begin position="1"/>
        <end position="437"/>
    </location>
</feature>
<feature type="region of interest" description="Unknown">
    <location>
        <begin position="1"/>
        <end position="172"/>
    </location>
</feature>
<feature type="region of interest" description="Disordered" evidence="2">
    <location>
        <begin position="64"/>
        <end position="158"/>
    </location>
</feature>
<feature type="region of interest" description="Endoribonuclease YbeY">
    <location>
        <begin position="173"/>
        <end position="437"/>
    </location>
</feature>
<feature type="compositionally biased region" description="Low complexity" evidence="2">
    <location>
        <begin position="131"/>
        <end position="140"/>
    </location>
</feature>
<feature type="binding site" evidence="1">
    <location>
        <position position="399"/>
    </location>
    <ligand>
        <name>Zn(2+)</name>
        <dbReference type="ChEBI" id="CHEBI:29105"/>
        <note>catalytic</note>
    </ligand>
</feature>
<feature type="binding site" evidence="1">
    <location>
        <position position="403"/>
    </location>
    <ligand>
        <name>Zn(2+)</name>
        <dbReference type="ChEBI" id="CHEBI:29105"/>
        <note>catalytic</note>
    </ligand>
</feature>
<feature type="binding site" evidence="1">
    <location>
        <position position="409"/>
    </location>
    <ligand>
        <name>Zn(2+)</name>
        <dbReference type="ChEBI" id="CHEBI:29105"/>
        <note>catalytic</note>
    </ligand>
</feature>
<accession>Q2T103</accession>
<evidence type="ECO:0000250" key="1"/>
<evidence type="ECO:0000256" key="2">
    <source>
        <dbReference type="SAM" id="MobiDB-lite"/>
    </source>
</evidence>
<evidence type="ECO:0000305" key="3"/>